<feature type="chain" id="PRO_0000122228" description="Protein cornichon homolog 3">
    <location>
        <begin position="1"/>
        <end position="160"/>
    </location>
</feature>
<feature type="topological domain" description="Cytoplasmic" evidence="2">
    <location>
        <begin position="1"/>
        <end position="10"/>
    </location>
</feature>
<feature type="transmembrane region" description="Helical" evidence="2">
    <location>
        <begin position="11"/>
        <end position="31"/>
    </location>
</feature>
<feature type="topological domain" description="Lumenal" evidence="2">
    <location>
        <begin position="32"/>
        <end position="72"/>
    </location>
</feature>
<feature type="transmembrane region" description="Helical" evidence="2">
    <location>
        <begin position="73"/>
        <end position="93"/>
    </location>
</feature>
<feature type="topological domain" description="Cytoplasmic" evidence="2">
    <location>
        <begin position="94"/>
        <end position="138"/>
    </location>
</feature>
<feature type="transmembrane region" description="Helical" evidence="2">
    <location>
        <begin position="139"/>
        <end position="159"/>
    </location>
</feature>
<feature type="topological domain" description="Lumenal" evidence="2">
    <location>
        <position position="160"/>
    </location>
</feature>
<evidence type="ECO:0000250" key="1"/>
<evidence type="ECO:0000255" key="2"/>
<evidence type="ECO:0000269" key="3">
    <source>
    </source>
</evidence>
<evidence type="ECO:0000269" key="4">
    <source>
    </source>
</evidence>
<evidence type="ECO:0000305" key="5"/>
<protein>
    <recommendedName>
        <fullName>Protein cornichon homolog 3</fullName>
        <shortName>CNIH-3</shortName>
    </recommendedName>
    <alternativeName>
        <fullName>Cornichon family AMPA receptor auxiliary protein 3</fullName>
    </alternativeName>
</protein>
<proteinExistence type="evidence at protein level"/>
<reference key="1">
    <citation type="journal article" date="2004" name="Nat. Genet.">
        <title>Complete sequencing and characterization of 21,243 full-length human cDNAs.</title>
        <authorList>
            <person name="Ota T."/>
            <person name="Suzuki Y."/>
            <person name="Nishikawa T."/>
            <person name="Otsuki T."/>
            <person name="Sugiyama T."/>
            <person name="Irie R."/>
            <person name="Wakamatsu A."/>
            <person name="Hayashi K."/>
            <person name="Sato H."/>
            <person name="Nagai K."/>
            <person name="Kimura K."/>
            <person name="Makita H."/>
            <person name="Sekine M."/>
            <person name="Obayashi M."/>
            <person name="Nishi T."/>
            <person name="Shibahara T."/>
            <person name="Tanaka T."/>
            <person name="Ishii S."/>
            <person name="Yamamoto J."/>
            <person name="Saito K."/>
            <person name="Kawai Y."/>
            <person name="Isono Y."/>
            <person name="Nakamura Y."/>
            <person name="Nagahari K."/>
            <person name="Murakami K."/>
            <person name="Yasuda T."/>
            <person name="Iwayanagi T."/>
            <person name="Wagatsuma M."/>
            <person name="Shiratori A."/>
            <person name="Sudo H."/>
            <person name="Hosoiri T."/>
            <person name="Kaku Y."/>
            <person name="Kodaira H."/>
            <person name="Kondo H."/>
            <person name="Sugawara M."/>
            <person name="Takahashi M."/>
            <person name="Kanda K."/>
            <person name="Yokoi T."/>
            <person name="Furuya T."/>
            <person name="Kikkawa E."/>
            <person name="Omura Y."/>
            <person name="Abe K."/>
            <person name="Kamihara K."/>
            <person name="Katsuta N."/>
            <person name="Sato K."/>
            <person name="Tanikawa M."/>
            <person name="Yamazaki M."/>
            <person name="Ninomiya K."/>
            <person name="Ishibashi T."/>
            <person name="Yamashita H."/>
            <person name="Murakawa K."/>
            <person name="Fujimori K."/>
            <person name="Tanai H."/>
            <person name="Kimata M."/>
            <person name="Watanabe M."/>
            <person name="Hiraoka S."/>
            <person name="Chiba Y."/>
            <person name="Ishida S."/>
            <person name="Ono Y."/>
            <person name="Takiguchi S."/>
            <person name="Watanabe S."/>
            <person name="Yosida M."/>
            <person name="Hotuta T."/>
            <person name="Kusano J."/>
            <person name="Kanehori K."/>
            <person name="Takahashi-Fujii A."/>
            <person name="Hara H."/>
            <person name="Tanase T.-O."/>
            <person name="Nomura Y."/>
            <person name="Togiya S."/>
            <person name="Komai F."/>
            <person name="Hara R."/>
            <person name="Takeuchi K."/>
            <person name="Arita M."/>
            <person name="Imose N."/>
            <person name="Musashino K."/>
            <person name="Yuuki H."/>
            <person name="Oshima A."/>
            <person name="Sasaki N."/>
            <person name="Aotsuka S."/>
            <person name="Yoshikawa Y."/>
            <person name="Matsunawa H."/>
            <person name="Ichihara T."/>
            <person name="Shiohata N."/>
            <person name="Sano S."/>
            <person name="Moriya S."/>
            <person name="Momiyama H."/>
            <person name="Satoh N."/>
            <person name="Takami S."/>
            <person name="Terashima Y."/>
            <person name="Suzuki O."/>
            <person name="Nakagawa S."/>
            <person name="Senoh A."/>
            <person name="Mizoguchi H."/>
            <person name="Goto Y."/>
            <person name="Shimizu F."/>
            <person name="Wakebe H."/>
            <person name="Hishigaki H."/>
            <person name="Watanabe T."/>
            <person name="Sugiyama A."/>
            <person name="Takemoto M."/>
            <person name="Kawakami B."/>
            <person name="Yamazaki M."/>
            <person name="Watanabe K."/>
            <person name="Kumagai A."/>
            <person name="Itakura S."/>
            <person name="Fukuzumi Y."/>
            <person name="Fujimori Y."/>
            <person name="Komiyama M."/>
            <person name="Tashiro H."/>
            <person name="Tanigami A."/>
            <person name="Fujiwara T."/>
            <person name="Ono T."/>
            <person name="Yamada K."/>
            <person name="Fujii Y."/>
            <person name="Ozaki K."/>
            <person name="Hirao M."/>
            <person name="Ohmori Y."/>
            <person name="Kawabata A."/>
            <person name="Hikiji T."/>
            <person name="Kobatake N."/>
            <person name="Inagaki H."/>
            <person name="Ikema Y."/>
            <person name="Okamoto S."/>
            <person name="Okitani R."/>
            <person name="Kawakami T."/>
            <person name="Noguchi S."/>
            <person name="Itoh T."/>
            <person name="Shigeta K."/>
            <person name="Senba T."/>
            <person name="Matsumura K."/>
            <person name="Nakajima Y."/>
            <person name="Mizuno T."/>
            <person name="Morinaga M."/>
            <person name="Sasaki M."/>
            <person name="Togashi T."/>
            <person name="Oyama M."/>
            <person name="Hata H."/>
            <person name="Watanabe M."/>
            <person name="Komatsu T."/>
            <person name="Mizushima-Sugano J."/>
            <person name="Satoh T."/>
            <person name="Shirai Y."/>
            <person name="Takahashi Y."/>
            <person name="Nakagawa K."/>
            <person name="Okumura K."/>
            <person name="Nagase T."/>
            <person name="Nomura N."/>
            <person name="Kikuchi H."/>
            <person name="Masuho Y."/>
            <person name="Yamashita R."/>
            <person name="Nakai K."/>
            <person name="Yada T."/>
            <person name="Nakamura Y."/>
            <person name="Ohara O."/>
            <person name="Isogai T."/>
            <person name="Sugano S."/>
        </authorList>
    </citation>
    <scope>NUCLEOTIDE SEQUENCE [LARGE SCALE MRNA]</scope>
</reference>
<reference key="2">
    <citation type="journal article" date="2006" name="Nature">
        <title>The DNA sequence and biological annotation of human chromosome 1.</title>
        <authorList>
            <person name="Gregory S.G."/>
            <person name="Barlow K.F."/>
            <person name="McLay K.E."/>
            <person name="Kaul R."/>
            <person name="Swarbreck D."/>
            <person name="Dunham A."/>
            <person name="Scott C.E."/>
            <person name="Howe K.L."/>
            <person name="Woodfine K."/>
            <person name="Spencer C.C.A."/>
            <person name="Jones M.C."/>
            <person name="Gillson C."/>
            <person name="Searle S."/>
            <person name="Zhou Y."/>
            <person name="Kokocinski F."/>
            <person name="McDonald L."/>
            <person name="Evans R."/>
            <person name="Phillips K."/>
            <person name="Atkinson A."/>
            <person name="Cooper R."/>
            <person name="Jones C."/>
            <person name="Hall R.E."/>
            <person name="Andrews T.D."/>
            <person name="Lloyd C."/>
            <person name="Ainscough R."/>
            <person name="Almeida J.P."/>
            <person name="Ambrose K.D."/>
            <person name="Anderson F."/>
            <person name="Andrew R.W."/>
            <person name="Ashwell R.I.S."/>
            <person name="Aubin K."/>
            <person name="Babbage A.K."/>
            <person name="Bagguley C.L."/>
            <person name="Bailey J."/>
            <person name="Beasley H."/>
            <person name="Bethel G."/>
            <person name="Bird C.P."/>
            <person name="Bray-Allen S."/>
            <person name="Brown J.Y."/>
            <person name="Brown A.J."/>
            <person name="Buckley D."/>
            <person name="Burton J."/>
            <person name="Bye J."/>
            <person name="Carder C."/>
            <person name="Chapman J.C."/>
            <person name="Clark S.Y."/>
            <person name="Clarke G."/>
            <person name="Clee C."/>
            <person name="Cobley V."/>
            <person name="Collier R.E."/>
            <person name="Corby N."/>
            <person name="Coville G.J."/>
            <person name="Davies J."/>
            <person name="Deadman R."/>
            <person name="Dunn M."/>
            <person name="Earthrowl M."/>
            <person name="Ellington A.G."/>
            <person name="Errington H."/>
            <person name="Frankish A."/>
            <person name="Frankland J."/>
            <person name="French L."/>
            <person name="Garner P."/>
            <person name="Garnett J."/>
            <person name="Gay L."/>
            <person name="Ghori M.R.J."/>
            <person name="Gibson R."/>
            <person name="Gilby L.M."/>
            <person name="Gillett W."/>
            <person name="Glithero R.J."/>
            <person name="Grafham D.V."/>
            <person name="Griffiths C."/>
            <person name="Griffiths-Jones S."/>
            <person name="Grocock R."/>
            <person name="Hammond S."/>
            <person name="Harrison E.S.I."/>
            <person name="Hart E."/>
            <person name="Haugen E."/>
            <person name="Heath P.D."/>
            <person name="Holmes S."/>
            <person name="Holt K."/>
            <person name="Howden P.J."/>
            <person name="Hunt A.R."/>
            <person name="Hunt S.E."/>
            <person name="Hunter G."/>
            <person name="Isherwood J."/>
            <person name="James R."/>
            <person name="Johnson C."/>
            <person name="Johnson D."/>
            <person name="Joy A."/>
            <person name="Kay M."/>
            <person name="Kershaw J.K."/>
            <person name="Kibukawa M."/>
            <person name="Kimberley A.M."/>
            <person name="King A."/>
            <person name="Knights A.J."/>
            <person name="Lad H."/>
            <person name="Laird G."/>
            <person name="Lawlor S."/>
            <person name="Leongamornlert D.A."/>
            <person name="Lloyd D.M."/>
            <person name="Loveland J."/>
            <person name="Lovell J."/>
            <person name="Lush M.J."/>
            <person name="Lyne R."/>
            <person name="Martin S."/>
            <person name="Mashreghi-Mohammadi M."/>
            <person name="Matthews L."/>
            <person name="Matthews N.S.W."/>
            <person name="McLaren S."/>
            <person name="Milne S."/>
            <person name="Mistry S."/>
            <person name="Moore M.J.F."/>
            <person name="Nickerson T."/>
            <person name="O'Dell C.N."/>
            <person name="Oliver K."/>
            <person name="Palmeiri A."/>
            <person name="Palmer S.A."/>
            <person name="Parker A."/>
            <person name="Patel D."/>
            <person name="Pearce A.V."/>
            <person name="Peck A.I."/>
            <person name="Pelan S."/>
            <person name="Phelps K."/>
            <person name="Phillimore B.J."/>
            <person name="Plumb R."/>
            <person name="Rajan J."/>
            <person name="Raymond C."/>
            <person name="Rouse G."/>
            <person name="Saenphimmachak C."/>
            <person name="Sehra H.K."/>
            <person name="Sheridan E."/>
            <person name="Shownkeen R."/>
            <person name="Sims S."/>
            <person name="Skuce C.D."/>
            <person name="Smith M."/>
            <person name="Steward C."/>
            <person name="Subramanian S."/>
            <person name="Sycamore N."/>
            <person name="Tracey A."/>
            <person name="Tromans A."/>
            <person name="Van Helmond Z."/>
            <person name="Wall M."/>
            <person name="Wallis J.M."/>
            <person name="White S."/>
            <person name="Whitehead S.L."/>
            <person name="Wilkinson J.E."/>
            <person name="Willey D.L."/>
            <person name="Williams H."/>
            <person name="Wilming L."/>
            <person name="Wray P.W."/>
            <person name="Wu Z."/>
            <person name="Coulson A."/>
            <person name="Vaudin M."/>
            <person name="Sulston J.E."/>
            <person name="Durbin R.M."/>
            <person name="Hubbard T."/>
            <person name="Wooster R."/>
            <person name="Dunham I."/>
            <person name="Carter N.P."/>
            <person name="McVean G."/>
            <person name="Ross M.T."/>
            <person name="Harrow J."/>
            <person name="Olson M.V."/>
            <person name="Beck S."/>
            <person name="Rogers J."/>
            <person name="Bentley D.R."/>
        </authorList>
    </citation>
    <scope>NUCLEOTIDE SEQUENCE [LARGE SCALE GENOMIC DNA]</scope>
</reference>
<reference key="3">
    <citation type="journal article" date="2004" name="Genome Res.">
        <title>The status, quality, and expansion of the NIH full-length cDNA project: the Mammalian Gene Collection (MGC).</title>
        <authorList>
            <consortium name="The MGC Project Team"/>
        </authorList>
    </citation>
    <scope>NUCLEOTIDE SEQUENCE [LARGE SCALE MRNA]</scope>
    <source>
        <tissue>Lung</tissue>
    </source>
</reference>
<reference key="4">
    <citation type="journal article" date="2010" name="Proc. Natl. Acad. Sci. U.S.A.">
        <title>Functional comparison of the effects of TARPs and cornichons on AMPA receptor trafficking and gating.</title>
        <authorList>
            <person name="Shi Y."/>
            <person name="Suh Y.H."/>
            <person name="Milstein A.D."/>
            <person name="Isozaki K."/>
            <person name="Schmid S.M."/>
            <person name="Roche K.W."/>
            <person name="Nicoll R.A."/>
        </authorList>
    </citation>
    <scope>FUNCTION</scope>
</reference>
<reference key="5">
    <citation type="journal article" date="2012" name="NeuroReport">
        <title>Upregulation of cornichon transcripts in the dorsolateral prefrontal cortex in schizophrenia.</title>
        <authorList>
            <person name="Drummond J.B."/>
            <person name="Simmons M."/>
            <person name="Haroutunian V."/>
            <person name="Meador-Woodruff J.H."/>
        </authorList>
    </citation>
    <scope>TISSUE SPECIFICITY</scope>
</reference>
<dbReference type="EMBL" id="AK096312">
    <property type="protein sequence ID" value="BAC04760.1"/>
    <property type="molecule type" value="mRNA"/>
</dbReference>
<dbReference type="EMBL" id="AC096537">
    <property type="status" value="NOT_ANNOTATED_CDS"/>
    <property type="molecule type" value="Genomic_DNA"/>
</dbReference>
<dbReference type="EMBL" id="AL596330">
    <property type="status" value="NOT_ANNOTATED_CDS"/>
    <property type="molecule type" value="Genomic_DNA"/>
</dbReference>
<dbReference type="EMBL" id="BC022780">
    <property type="protein sequence ID" value="AAH22780.1"/>
    <property type="molecule type" value="mRNA"/>
</dbReference>
<dbReference type="CCDS" id="CCDS1544.1"/>
<dbReference type="RefSeq" id="NP_689708.1">
    <property type="nucleotide sequence ID" value="NM_152495.2"/>
</dbReference>
<dbReference type="SMR" id="Q8TBE1"/>
<dbReference type="BioGRID" id="127193">
    <property type="interactions" value="29"/>
</dbReference>
<dbReference type="FunCoup" id="Q8TBE1">
    <property type="interactions" value="63"/>
</dbReference>
<dbReference type="IntAct" id="Q8TBE1">
    <property type="interactions" value="26"/>
</dbReference>
<dbReference type="STRING" id="9606.ENSP00000272133"/>
<dbReference type="TCDB" id="8.A.61.1.10">
    <property type="family name" value="the endoplasmic reticulum-derived vesicle protein, erv14 (erv14) family"/>
</dbReference>
<dbReference type="BioMuta" id="CNIH3"/>
<dbReference type="DMDM" id="27805431"/>
<dbReference type="MassIVE" id="Q8TBE1"/>
<dbReference type="PaxDb" id="9606-ENSP00000272133"/>
<dbReference type="PeptideAtlas" id="Q8TBE1"/>
<dbReference type="ProteomicsDB" id="73999"/>
<dbReference type="Antibodypedia" id="34640">
    <property type="antibodies" value="118 antibodies from 20 providers"/>
</dbReference>
<dbReference type="DNASU" id="149111"/>
<dbReference type="Ensembl" id="ENST00000272133.4">
    <property type="protein sequence ID" value="ENSP00000272133.3"/>
    <property type="gene ID" value="ENSG00000143786.8"/>
</dbReference>
<dbReference type="GeneID" id="149111"/>
<dbReference type="KEGG" id="hsa:149111"/>
<dbReference type="MANE-Select" id="ENST00000272133.4">
    <property type="protein sequence ID" value="ENSP00000272133.3"/>
    <property type="RefSeq nucleotide sequence ID" value="NM_152495.2"/>
    <property type="RefSeq protein sequence ID" value="NP_689708.1"/>
</dbReference>
<dbReference type="UCSC" id="uc001hos.2">
    <property type="organism name" value="human"/>
</dbReference>
<dbReference type="AGR" id="HGNC:26802"/>
<dbReference type="CTD" id="149111"/>
<dbReference type="DisGeNET" id="149111"/>
<dbReference type="GeneCards" id="CNIH3"/>
<dbReference type="HGNC" id="HGNC:26802">
    <property type="gene designation" value="CNIH3"/>
</dbReference>
<dbReference type="HPA" id="ENSG00000143786">
    <property type="expression patterns" value="Group enriched (brain, pancreas)"/>
</dbReference>
<dbReference type="neXtProt" id="NX_Q8TBE1"/>
<dbReference type="OpenTargets" id="ENSG00000143786"/>
<dbReference type="PharmGKB" id="PA134929862"/>
<dbReference type="VEuPathDB" id="HostDB:ENSG00000143786"/>
<dbReference type="eggNOG" id="KOG2729">
    <property type="taxonomic scope" value="Eukaryota"/>
</dbReference>
<dbReference type="GeneTree" id="ENSGT00950000182834"/>
<dbReference type="HOGENOM" id="CLU_112942_1_0_1"/>
<dbReference type="InParanoid" id="Q8TBE1"/>
<dbReference type="OMA" id="VFYHFWR"/>
<dbReference type="OrthoDB" id="434393at2759"/>
<dbReference type="PAN-GO" id="Q8TBE1">
    <property type="GO annotations" value="3 GO annotations based on evolutionary models"/>
</dbReference>
<dbReference type="PhylomeDB" id="Q8TBE1"/>
<dbReference type="TreeFam" id="TF300083"/>
<dbReference type="PathwayCommons" id="Q8TBE1"/>
<dbReference type="Reactome" id="R-HSA-204005">
    <property type="pathway name" value="COPII-mediated vesicle transport"/>
</dbReference>
<dbReference type="Reactome" id="R-HSA-5694530">
    <property type="pathway name" value="Cargo concentration in the ER"/>
</dbReference>
<dbReference type="SignaLink" id="Q8TBE1"/>
<dbReference type="BioGRID-ORCS" id="149111">
    <property type="hits" value="14 hits in 1148 CRISPR screens"/>
</dbReference>
<dbReference type="ChiTaRS" id="CNIH3">
    <property type="organism name" value="human"/>
</dbReference>
<dbReference type="GenomeRNAi" id="149111"/>
<dbReference type="Pharos" id="Q8TBE1">
    <property type="development level" value="Tbio"/>
</dbReference>
<dbReference type="PRO" id="PR:Q8TBE1"/>
<dbReference type="Proteomes" id="UP000005640">
    <property type="component" value="Chromosome 1"/>
</dbReference>
<dbReference type="RNAct" id="Q8TBE1">
    <property type="molecule type" value="protein"/>
</dbReference>
<dbReference type="Bgee" id="ENSG00000143786">
    <property type="expression patterns" value="Expressed in primordial germ cell in gonad and 130 other cell types or tissues"/>
</dbReference>
<dbReference type="GO" id="GO:0032281">
    <property type="term" value="C:AMPA glutamate receptor complex"/>
    <property type="evidence" value="ECO:0000250"/>
    <property type="project" value="UniProtKB"/>
</dbReference>
<dbReference type="GO" id="GO:0030425">
    <property type="term" value="C:dendrite"/>
    <property type="evidence" value="ECO:0000318"/>
    <property type="project" value="GO_Central"/>
</dbReference>
<dbReference type="GO" id="GO:0043198">
    <property type="term" value="C:dendritic shaft"/>
    <property type="evidence" value="ECO:0000250"/>
    <property type="project" value="UniProtKB"/>
</dbReference>
<dbReference type="GO" id="GO:0005789">
    <property type="term" value="C:endoplasmic reticulum membrane"/>
    <property type="evidence" value="ECO:0000304"/>
    <property type="project" value="Reactome"/>
</dbReference>
<dbReference type="GO" id="GO:0033116">
    <property type="term" value="C:endoplasmic reticulum-Golgi intermediate compartment membrane"/>
    <property type="evidence" value="ECO:0000304"/>
    <property type="project" value="Reactome"/>
</dbReference>
<dbReference type="GO" id="GO:0012507">
    <property type="term" value="C:ER to Golgi transport vesicle membrane"/>
    <property type="evidence" value="ECO:0000304"/>
    <property type="project" value="Reactome"/>
</dbReference>
<dbReference type="GO" id="GO:0098978">
    <property type="term" value="C:glutamatergic synapse"/>
    <property type="evidence" value="ECO:0007669"/>
    <property type="project" value="Ensembl"/>
</dbReference>
<dbReference type="GO" id="GO:0045211">
    <property type="term" value="C:postsynaptic membrane"/>
    <property type="evidence" value="ECO:0000250"/>
    <property type="project" value="UniProtKB"/>
</dbReference>
<dbReference type="GO" id="GO:0045202">
    <property type="term" value="C:synapse"/>
    <property type="evidence" value="ECO:0000318"/>
    <property type="project" value="GO_Central"/>
</dbReference>
<dbReference type="GO" id="GO:0016247">
    <property type="term" value="F:channel regulator activity"/>
    <property type="evidence" value="ECO:0007669"/>
    <property type="project" value="Ensembl"/>
</dbReference>
<dbReference type="GO" id="GO:0005102">
    <property type="term" value="F:signaling receptor binding"/>
    <property type="evidence" value="ECO:0000318"/>
    <property type="project" value="GO_Central"/>
</dbReference>
<dbReference type="GO" id="GO:0099645">
    <property type="term" value="P:neurotransmitter receptor localization to postsynaptic specialization membrane"/>
    <property type="evidence" value="ECO:0007669"/>
    <property type="project" value="Ensembl"/>
</dbReference>
<dbReference type="GO" id="GO:2000311">
    <property type="term" value="P:regulation of AMPA receptor activity"/>
    <property type="evidence" value="ECO:0000314"/>
    <property type="project" value="UniProtKB"/>
</dbReference>
<dbReference type="GO" id="GO:0042391">
    <property type="term" value="P:regulation of membrane potential"/>
    <property type="evidence" value="ECO:0007669"/>
    <property type="project" value="Ensembl"/>
</dbReference>
<dbReference type="GO" id="GO:0035249">
    <property type="term" value="P:synaptic transmission, glutamatergic"/>
    <property type="evidence" value="ECO:0000318"/>
    <property type="project" value="GO_Central"/>
</dbReference>
<dbReference type="GO" id="GO:0016192">
    <property type="term" value="P:vesicle-mediated transport"/>
    <property type="evidence" value="ECO:0007669"/>
    <property type="project" value="InterPro"/>
</dbReference>
<dbReference type="InterPro" id="IPR003377">
    <property type="entry name" value="Cornichon"/>
</dbReference>
<dbReference type="InterPro" id="IPR033466">
    <property type="entry name" value="Cornichon_conserved"/>
</dbReference>
<dbReference type="PANTHER" id="PTHR12290">
    <property type="entry name" value="CORNICHON-RELATED"/>
    <property type="match status" value="1"/>
</dbReference>
<dbReference type="Pfam" id="PF03311">
    <property type="entry name" value="Cornichon"/>
    <property type="match status" value="2"/>
</dbReference>
<dbReference type="SMART" id="SM01398">
    <property type="entry name" value="Cornichon"/>
    <property type="match status" value="1"/>
</dbReference>
<dbReference type="PROSITE" id="PS01340">
    <property type="entry name" value="CORNICHON"/>
    <property type="match status" value="1"/>
</dbReference>
<name>CNIH3_HUMAN</name>
<organism>
    <name type="scientific">Homo sapiens</name>
    <name type="common">Human</name>
    <dbReference type="NCBI Taxonomy" id="9606"/>
    <lineage>
        <taxon>Eukaryota</taxon>
        <taxon>Metazoa</taxon>
        <taxon>Chordata</taxon>
        <taxon>Craniata</taxon>
        <taxon>Vertebrata</taxon>
        <taxon>Euteleostomi</taxon>
        <taxon>Mammalia</taxon>
        <taxon>Eutheria</taxon>
        <taxon>Euarchontoglires</taxon>
        <taxon>Primates</taxon>
        <taxon>Haplorrhini</taxon>
        <taxon>Catarrhini</taxon>
        <taxon>Hominidae</taxon>
        <taxon>Homo</taxon>
    </lineage>
</organism>
<keyword id="KW-1003">Cell membrane</keyword>
<keyword id="KW-0472">Membrane</keyword>
<keyword id="KW-0628">Postsynaptic cell membrane</keyword>
<keyword id="KW-1267">Proteomics identification</keyword>
<keyword id="KW-1185">Reference proteome</keyword>
<keyword id="KW-0770">Synapse</keyword>
<keyword id="KW-0812">Transmembrane</keyword>
<keyword id="KW-1133">Transmembrane helix</keyword>
<gene>
    <name type="primary">CNIH3</name>
</gene>
<sequence>MAFTFAAFCYMLSLVLCAALIFFAIWHIIAFDELRTDFKSPIDQCNPVHARERLRNIERICFLLRKLVLPEYSIHSLFCIMFLCAQEWLTLGLNVPLLFYHFWRYFHCPADSSELAYDPPVVMNADTLSYCQKEAWCKLAFYLLSFFYYLYCMIYTLVSS</sequence>
<accession>Q8TBE1</accession>
<comment type="function">
    <text evidence="3">Regulates the trafficking and gating properties of AMPA-selective glutamate receptors (AMPARs). Promotes their targeting to the cell membrane and synapses and modulates their gating properties by regulating their rates of activation, deactivation and desensitization.</text>
</comment>
<comment type="subunit">
    <text evidence="1">Acts as an auxiliary subunit for AMPA-selective glutamate receptors (AMPARs). Found in a complex with GRIA1, GRIA2, GRIA3, GRIA4, CNIH2, CACNG2, CACNG3, CACNG4, CACNG5, CACNG7 and CACNG8 (By similarity).</text>
</comment>
<comment type="interaction">
    <interactant intactId="EBI-12208021">
        <id>Q8TBE1</id>
    </interactant>
    <interactant intactId="EBI-13059134">
        <id>Q13520</id>
        <label>AQP6</label>
    </interactant>
    <organismsDiffer>false</organismsDiffer>
    <experiments>3</experiments>
</comment>
<comment type="interaction">
    <interactant intactId="EBI-12208021">
        <id>Q8TBE1</id>
    </interactant>
    <interactant intactId="EBI-700794">
        <id>Q13323</id>
        <label>BIK</label>
    </interactant>
    <organismsDiffer>false</organismsDiffer>
    <experiments>3</experiments>
</comment>
<comment type="interaction">
    <interactant intactId="EBI-12208021">
        <id>Q8TBE1</id>
    </interactant>
    <interactant intactId="EBI-7797864">
        <id>P11912</id>
        <label>CD79A</label>
    </interactant>
    <organismsDiffer>false</organismsDiffer>
    <experiments>3</experiments>
</comment>
<comment type="interaction">
    <interactant intactId="EBI-12208021">
        <id>Q8TBE1</id>
    </interactant>
    <interactant intactId="EBI-12851752">
        <id>P40198</id>
        <label>CEACAM3</label>
    </interactant>
    <organismsDiffer>false</organismsDiffer>
    <experiments>3</experiments>
</comment>
<comment type="interaction">
    <interactant intactId="EBI-12208021">
        <id>Q8TBE1</id>
    </interactant>
    <interactant intactId="EBI-23801559">
        <id>P56880</id>
        <label>CLDN20</label>
    </interactant>
    <organismsDiffer>false</organismsDiffer>
    <experiments>3</experiments>
</comment>
<comment type="interaction">
    <interactant intactId="EBI-12208021">
        <id>Q8TBE1</id>
    </interactant>
    <interactant intactId="EBI-781551">
        <id>Q9Y282</id>
        <label>ERGIC3</label>
    </interactant>
    <organismsDiffer>false</organismsDiffer>
    <experiments>3</experiments>
</comment>
<comment type="interaction">
    <interactant intactId="EBI-12208021">
        <id>Q8TBE1</id>
    </interactant>
    <interactant intactId="EBI-18938272">
        <id>Q96KR6</id>
        <label>FAM210B</label>
    </interactant>
    <organismsDiffer>false</organismsDiffer>
    <experiments>3</experiments>
</comment>
<comment type="interaction">
    <interactant intactId="EBI-12208021">
        <id>Q8TBE1</id>
    </interactant>
    <interactant intactId="EBI-12142257">
        <id>Q8TBE3</id>
        <label>FNDC9</label>
    </interactant>
    <organismsDiffer>false</organismsDiffer>
    <experiments>3</experiments>
</comment>
<comment type="interaction">
    <interactant intactId="EBI-12208021">
        <id>Q8TBE1</id>
    </interactant>
    <interactant intactId="EBI-11721746">
        <id>Q8TED1</id>
        <label>GPX8</label>
    </interactant>
    <organismsDiffer>false</organismsDiffer>
    <experiments>3</experiments>
</comment>
<comment type="interaction">
    <interactant intactId="EBI-12208021">
        <id>Q8TBE1</id>
    </interactant>
    <interactant intactId="EBI-2924473">
        <id>O15554</id>
        <label>KCNN4</label>
    </interactant>
    <organismsDiffer>false</organismsDiffer>
    <experiments>3</experiments>
</comment>
<comment type="interaction">
    <interactant intactId="EBI-12208021">
        <id>Q8TBE1</id>
    </interactant>
    <interactant intactId="EBI-17490413">
        <id>A8MZ59</id>
        <label>LEUTX</label>
    </interactant>
    <organismsDiffer>false</organismsDiffer>
    <experiments>3</experiments>
</comment>
<comment type="interaction">
    <interactant intactId="EBI-12208021">
        <id>Q8TBE1</id>
    </interactant>
    <interactant intactId="EBI-11304917">
        <id>Q8N386</id>
        <label>LRRC25</label>
    </interactant>
    <organismsDiffer>false</organismsDiffer>
    <experiments>3</experiments>
</comment>
<comment type="interaction">
    <interactant intactId="EBI-12208021">
        <id>Q8TBE1</id>
    </interactant>
    <interactant intactId="EBI-10969203">
        <id>O14524-2</id>
        <label>NEMP1</label>
    </interactant>
    <organismsDiffer>false</organismsDiffer>
    <experiments>3</experiments>
</comment>
<comment type="interaction">
    <interactant intactId="EBI-12208021">
        <id>Q8TBE1</id>
    </interactant>
    <interactant intactId="EBI-12382569">
        <id>Q2M2E3</id>
        <label>ODF4</label>
    </interactant>
    <organismsDiffer>false</organismsDiffer>
    <experiments>3</experiments>
</comment>
<comment type="interaction">
    <interactant intactId="EBI-12208021">
        <id>Q8TBE1</id>
    </interactant>
    <interactant intactId="EBI-748974">
        <id>Q96CV9</id>
        <label>OPTN</label>
    </interactant>
    <organismsDiffer>false</organismsDiffer>
    <experiments>3</experiments>
</comment>
<comment type="interaction">
    <interactant intactId="EBI-12208021">
        <id>Q8TBE1</id>
    </interactant>
    <interactant intactId="EBI-2689908">
        <id>Q8IV08</id>
        <label>PLD3</label>
    </interactant>
    <organismsDiffer>false</organismsDiffer>
    <experiments>3</experiments>
</comment>
<comment type="interaction">
    <interactant intactId="EBI-12208021">
        <id>Q8TBE1</id>
    </interactant>
    <interactant intactId="EBI-741850">
        <id>Q9BZL3</id>
        <label>SMIM3</label>
    </interactant>
    <organismsDiffer>false</organismsDiffer>
    <experiments>5</experiments>
</comment>
<comment type="interaction">
    <interactant intactId="EBI-12208021">
        <id>Q8TBE1</id>
    </interactant>
    <interactant intactId="EBI-1057058">
        <id>Q99523</id>
        <label>SORT1</label>
    </interactant>
    <organismsDiffer>false</organismsDiffer>
    <experiments>3</experiments>
</comment>
<comment type="interaction">
    <interactant intactId="EBI-12208021">
        <id>Q8TBE1</id>
    </interactant>
    <interactant intactId="EBI-1211440">
        <id>P27105</id>
        <label>STOM</label>
    </interactant>
    <organismsDiffer>false</organismsDiffer>
    <experiments>3</experiments>
</comment>
<comment type="interaction">
    <interactant intactId="EBI-12208021">
        <id>Q8TBE1</id>
    </interactant>
    <interactant intactId="EBI-18194029">
        <id>Q96L08</id>
        <label>SUSD3</label>
    </interactant>
    <organismsDiffer>false</organismsDiffer>
    <experiments>3</experiments>
</comment>
<comment type="interaction">
    <interactant intactId="EBI-12208021">
        <id>Q8TBE1</id>
    </interactant>
    <interactant intactId="EBI-8638294">
        <id>Q9NUH8</id>
        <label>TMEM14B</label>
    </interactant>
    <organismsDiffer>false</organismsDiffer>
    <experiments>3</experiments>
</comment>
<comment type="interaction">
    <interactant intactId="EBI-12208021">
        <id>Q8TBE1</id>
    </interactant>
    <interactant intactId="EBI-10982110">
        <id>Q96Q45-2</id>
        <label>TMEM237</label>
    </interactant>
    <organismsDiffer>false</organismsDiffer>
    <experiments>3</experiments>
</comment>
<comment type="interaction">
    <interactant intactId="EBI-12208021">
        <id>Q8TBE1</id>
    </interactant>
    <interactant intactId="EBI-18178701">
        <id>Q4KMG9</id>
        <label>TMEM52B</label>
    </interactant>
    <organismsDiffer>false</organismsDiffer>
    <experiments>3</experiments>
</comment>
<comment type="interaction">
    <interactant intactId="EBI-12208021">
        <id>Q8TBE1</id>
    </interactant>
    <interactant intactId="EBI-11742770">
        <id>Q96HE8</id>
        <label>TMEM80</label>
    </interactant>
    <organismsDiffer>false</organismsDiffer>
    <experiments>3</experiments>
</comment>
<comment type="interaction">
    <interactant intactId="EBI-12208021">
        <id>Q8TBE1</id>
    </interactant>
    <interactant intactId="EBI-12345267">
        <id>O15393-2</id>
        <label>TMPRSS2</label>
    </interactant>
    <organismsDiffer>false</organismsDiffer>
    <experiments>3</experiments>
</comment>
<comment type="interaction">
    <interactant intactId="EBI-12208021">
        <id>Q8TBE1</id>
    </interactant>
    <interactant intactId="EBI-744988">
        <id>Q9H7M9</id>
        <label>VSIR</label>
    </interactant>
    <organismsDiffer>false</organismsDiffer>
    <experiments>3</experiments>
</comment>
<comment type="subcellular location">
    <subcellularLocation>
        <location evidence="1">Postsynaptic cell membrane</location>
        <topology evidence="1">Multi-pass membrane protein</topology>
    </subcellularLocation>
    <text evidence="1">Also localizes to the cell membrane of extrasynaptic sites (dendritic shafts, spines of pyramidal cells).</text>
</comment>
<comment type="tissue specificity">
    <text evidence="4">Expression is up-regulated in dorsolateral prefrontal cortex of patients with schizophrenia (postmortem brain study).</text>
</comment>
<comment type="similarity">
    <text evidence="5">Belongs to the cornichon family.</text>
</comment>